<accession>A1UZP1</accession>
<proteinExistence type="inferred from homology"/>
<comment type="function">
    <text evidence="1">Reversibly transfers an adenylyl group from ATP to 4'-phosphopantetheine, yielding dephospho-CoA (dPCoA) and pyrophosphate.</text>
</comment>
<comment type="catalytic activity">
    <reaction evidence="1">
        <text>(R)-4'-phosphopantetheine + ATP + H(+) = 3'-dephospho-CoA + diphosphate</text>
        <dbReference type="Rhea" id="RHEA:19801"/>
        <dbReference type="ChEBI" id="CHEBI:15378"/>
        <dbReference type="ChEBI" id="CHEBI:30616"/>
        <dbReference type="ChEBI" id="CHEBI:33019"/>
        <dbReference type="ChEBI" id="CHEBI:57328"/>
        <dbReference type="ChEBI" id="CHEBI:61723"/>
        <dbReference type="EC" id="2.7.7.3"/>
    </reaction>
</comment>
<comment type="cofactor">
    <cofactor evidence="1">
        <name>Mg(2+)</name>
        <dbReference type="ChEBI" id="CHEBI:18420"/>
    </cofactor>
</comment>
<comment type="pathway">
    <text evidence="1">Cofactor biosynthesis; coenzyme A biosynthesis; CoA from (R)-pantothenate: step 4/5.</text>
</comment>
<comment type="subunit">
    <text evidence="1">Homohexamer.</text>
</comment>
<comment type="subcellular location">
    <subcellularLocation>
        <location evidence="1">Cytoplasm</location>
    </subcellularLocation>
</comment>
<comment type="similarity">
    <text evidence="1">Belongs to the bacterial CoaD family.</text>
</comment>
<sequence length="166" mass="18530">MVVAVYPGTFDPLTRGHEDLVRRASSIFDTLVVGVADSRAKKPFFSLEERLKIANEVLGHYPNVKVMGFTGLLKDFVRANDARVIVRGLRAVSDFEYEFQMAGMNRYLLPDVETMFMTPSDQYQFISGTIVREIAQLGGDVSKFVFPSVEKWLTEKVAAMAQGPSA</sequence>
<evidence type="ECO:0000255" key="1">
    <source>
        <dbReference type="HAMAP-Rule" id="MF_00151"/>
    </source>
</evidence>
<organism>
    <name type="scientific">Burkholderia mallei (strain SAVP1)</name>
    <dbReference type="NCBI Taxonomy" id="320388"/>
    <lineage>
        <taxon>Bacteria</taxon>
        <taxon>Pseudomonadati</taxon>
        <taxon>Pseudomonadota</taxon>
        <taxon>Betaproteobacteria</taxon>
        <taxon>Burkholderiales</taxon>
        <taxon>Burkholderiaceae</taxon>
        <taxon>Burkholderia</taxon>
        <taxon>pseudomallei group</taxon>
    </lineage>
</organism>
<feature type="chain" id="PRO_1000011108" description="Phosphopantetheine adenylyltransferase">
    <location>
        <begin position="1"/>
        <end position="166"/>
    </location>
</feature>
<feature type="binding site" evidence="1">
    <location>
        <begin position="9"/>
        <end position="10"/>
    </location>
    <ligand>
        <name>ATP</name>
        <dbReference type="ChEBI" id="CHEBI:30616"/>
    </ligand>
</feature>
<feature type="binding site" evidence="1">
    <location>
        <position position="9"/>
    </location>
    <ligand>
        <name>substrate</name>
    </ligand>
</feature>
<feature type="binding site" evidence="1">
    <location>
        <position position="17"/>
    </location>
    <ligand>
        <name>ATP</name>
        <dbReference type="ChEBI" id="CHEBI:30616"/>
    </ligand>
</feature>
<feature type="binding site" evidence="1">
    <location>
        <position position="41"/>
    </location>
    <ligand>
        <name>substrate</name>
    </ligand>
</feature>
<feature type="binding site" evidence="1">
    <location>
        <position position="73"/>
    </location>
    <ligand>
        <name>substrate</name>
    </ligand>
</feature>
<feature type="binding site" evidence="1">
    <location>
        <position position="87"/>
    </location>
    <ligand>
        <name>substrate</name>
    </ligand>
</feature>
<feature type="binding site" evidence="1">
    <location>
        <begin position="88"/>
        <end position="90"/>
    </location>
    <ligand>
        <name>ATP</name>
        <dbReference type="ChEBI" id="CHEBI:30616"/>
    </ligand>
</feature>
<feature type="binding site" evidence="1">
    <location>
        <position position="98"/>
    </location>
    <ligand>
        <name>ATP</name>
        <dbReference type="ChEBI" id="CHEBI:30616"/>
    </ligand>
</feature>
<feature type="binding site" evidence="1">
    <location>
        <begin position="123"/>
        <end position="129"/>
    </location>
    <ligand>
        <name>ATP</name>
        <dbReference type="ChEBI" id="CHEBI:30616"/>
    </ligand>
</feature>
<feature type="site" description="Transition state stabilizer" evidence="1">
    <location>
        <position position="17"/>
    </location>
</feature>
<keyword id="KW-0067">ATP-binding</keyword>
<keyword id="KW-0173">Coenzyme A biosynthesis</keyword>
<keyword id="KW-0963">Cytoplasm</keyword>
<keyword id="KW-0460">Magnesium</keyword>
<keyword id="KW-0547">Nucleotide-binding</keyword>
<keyword id="KW-0548">Nucleotidyltransferase</keyword>
<keyword id="KW-0808">Transferase</keyword>
<name>COAD_BURMS</name>
<dbReference type="EC" id="2.7.7.3" evidence="1"/>
<dbReference type="EMBL" id="CP000526">
    <property type="protein sequence ID" value="ABM52052.1"/>
    <property type="molecule type" value="Genomic_DNA"/>
</dbReference>
<dbReference type="RefSeq" id="WP_004195249.1">
    <property type="nucleotide sequence ID" value="NC_008785.1"/>
</dbReference>
<dbReference type="SMR" id="A1UZP1"/>
<dbReference type="GeneID" id="93059037"/>
<dbReference type="KEGG" id="bmv:BMASAVP1_A0093"/>
<dbReference type="HOGENOM" id="CLU_100149_0_1_4"/>
<dbReference type="UniPathway" id="UPA00241">
    <property type="reaction ID" value="UER00355"/>
</dbReference>
<dbReference type="GO" id="GO:0005737">
    <property type="term" value="C:cytoplasm"/>
    <property type="evidence" value="ECO:0007669"/>
    <property type="project" value="UniProtKB-SubCell"/>
</dbReference>
<dbReference type="GO" id="GO:0005524">
    <property type="term" value="F:ATP binding"/>
    <property type="evidence" value="ECO:0007669"/>
    <property type="project" value="UniProtKB-KW"/>
</dbReference>
<dbReference type="GO" id="GO:0004595">
    <property type="term" value="F:pantetheine-phosphate adenylyltransferase activity"/>
    <property type="evidence" value="ECO:0007669"/>
    <property type="project" value="UniProtKB-UniRule"/>
</dbReference>
<dbReference type="GO" id="GO:0015937">
    <property type="term" value="P:coenzyme A biosynthetic process"/>
    <property type="evidence" value="ECO:0007669"/>
    <property type="project" value="UniProtKB-UniRule"/>
</dbReference>
<dbReference type="CDD" id="cd02163">
    <property type="entry name" value="PPAT"/>
    <property type="match status" value="1"/>
</dbReference>
<dbReference type="Gene3D" id="3.40.50.620">
    <property type="entry name" value="HUPs"/>
    <property type="match status" value="1"/>
</dbReference>
<dbReference type="HAMAP" id="MF_00151">
    <property type="entry name" value="PPAT_bact"/>
    <property type="match status" value="1"/>
</dbReference>
<dbReference type="InterPro" id="IPR004821">
    <property type="entry name" value="Cyt_trans-like"/>
</dbReference>
<dbReference type="InterPro" id="IPR001980">
    <property type="entry name" value="PPAT"/>
</dbReference>
<dbReference type="InterPro" id="IPR014729">
    <property type="entry name" value="Rossmann-like_a/b/a_fold"/>
</dbReference>
<dbReference type="NCBIfam" id="TIGR01510">
    <property type="entry name" value="coaD_prev_kdtB"/>
    <property type="match status" value="1"/>
</dbReference>
<dbReference type="NCBIfam" id="TIGR00125">
    <property type="entry name" value="cyt_tran_rel"/>
    <property type="match status" value="1"/>
</dbReference>
<dbReference type="PANTHER" id="PTHR21342">
    <property type="entry name" value="PHOSPHOPANTETHEINE ADENYLYLTRANSFERASE"/>
    <property type="match status" value="1"/>
</dbReference>
<dbReference type="PANTHER" id="PTHR21342:SF1">
    <property type="entry name" value="PHOSPHOPANTETHEINE ADENYLYLTRANSFERASE"/>
    <property type="match status" value="1"/>
</dbReference>
<dbReference type="Pfam" id="PF01467">
    <property type="entry name" value="CTP_transf_like"/>
    <property type="match status" value="1"/>
</dbReference>
<dbReference type="PRINTS" id="PR01020">
    <property type="entry name" value="LPSBIOSNTHSS"/>
</dbReference>
<dbReference type="SUPFAM" id="SSF52374">
    <property type="entry name" value="Nucleotidylyl transferase"/>
    <property type="match status" value="1"/>
</dbReference>
<protein>
    <recommendedName>
        <fullName evidence="1">Phosphopantetheine adenylyltransferase</fullName>
        <ecNumber evidence="1">2.7.7.3</ecNumber>
    </recommendedName>
    <alternativeName>
        <fullName evidence="1">Dephospho-CoA pyrophosphorylase</fullName>
    </alternativeName>
    <alternativeName>
        <fullName evidence="1">Pantetheine-phosphate adenylyltransferase</fullName>
        <shortName evidence="1">PPAT</shortName>
    </alternativeName>
</protein>
<gene>
    <name evidence="1" type="primary">coaD</name>
    <name type="ordered locus">BMASAVP1_A0093</name>
</gene>
<reference key="1">
    <citation type="journal article" date="2010" name="Genome Biol. Evol.">
        <title>Continuing evolution of Burkholderia mallei through genome reduction and large-scale rearrangements.</title>
        <authorList>
            <person name="Losada L."/>
            <person name="Ronning C.M."/>
            <person name="DeShazer D."/>
            <person name="Woods D."/>
            <person name="Fedorova N."/>
            <person name="Kim H.S."/>
            <person name="Shabalina S.A."/>
            <person name="Pearson T.R."/>
            <person name="Brinkac L."/>
            <person name="Tan P."/>
            <person name="Nandi T."/>
            <person name="Crabtree J."/>
            <person name="Badger J."/>
            <person name="Beckstrom-Sternberg S."/>
            <person name="Saqib M."/>
            <person name="Schutzer S.E."/>
            <person name="Keim P."/>
            <person name="Nierman W.C."/>
        </authorList>
    </citation>
    <scope>NUCLEOTIDE SEQUENCE [LARGE SCALE GENOMIC DNA]</scope>
    <source>
        <strain>SAVP1</strain>
    </source>
</reference>